<reference key="1">
    <citation type="journal article" date="2002" name="Nature">
        <title>The genome sequence of Schizosaccharomyces pombe.</title>
        <authorList>
            <person name="Wood V."/>
            <person name="Gwilliam R."/>
            <person name="Rajandream M.A."/>
            <person name="Lyne M.H."/>
            <person name="Lyne R."/>
            <person name="Stewart A."/>
            <person name="Sgouros J.G."/>
            <person name="Peat N."/>
            <person name="Hayles J."/>
            <person name="Baker S.G."/>
            <person name="Basham D."/>
            <person name="Bowman S."/>
            <person name="Brooks K."/>
            <person name="Brown D."/>
            <person name="Brown S."/>
            <person name="Chillingworth T."/>
            <person name="Churcher C.M."/>
            <person name="Collins M."/>
            <person name="Connor R."/>
            <person name="Cronin A."/>
            <person name="Davis P."/>
            <person name="Feltwell T."/>
            <person name="Fraser A."/>
            <person name="Gentles S."/>
            <person name="Goble A."/>
            <person name="Hamlin N."/>
            <person name="Harris D.E."/>
            <person name="Hidalgo J."/>
            <person name="Hodgson G."/>
            <person name="Holroyd S."/>
            <person name="Hornsby T."/>
            <person name="Howarth S."/>
            <person name="Huckle E.J."/>
            <person name="Hunt S."/>
            <person name="Jagels K."/>
            <person name="James K.D."/>
            <person name="Jones L."/>
            <person name="Jones M."/>
            <person name="Leather S."/>
            <person name="McDonald S."/>
            <person name="McLean J."/>
            <person name="Mooney P."/>
            <person name="Moule S."/>
            <person name="Mungall K.L."/>
            <person name="Murphy L.D."/>
            <person name="Niblett D."/>
            <person name="Odell C."/>
            <person name="Oliver K."/>
            <person name="O'Neil S."/>
            <person name="Pearson D."/>
            <person name="Quail M.A."/>
            <person name="Rabbinowitsch E."/>
            <person name="Rutherford K.M."/>
            <person name="Rutter S."/>
            <person name="Saunders D."/>
            <person name="Seeger K."/>
            <person name="Sharp S."/>
            <person name="Skelton J."/>
            <person name="Simmonds M.N."/>
            <person name="Squares R."/>
            <person name="Squares S."/>
            <person name="Stevens K."/>
            <person name="Taylor K."/>
            <person name="Taylor R.G."/>
            <person name="Tivey A."/>
            <person name="Walsh S.V."/>
            <person name="Warren T."/>
            <person name="Whitehead S."/>
            <person name="Woodward J.R."/>
            <person name="Volckaert G."/>
            <person name="Aert R."/>
            <person name="Robben J."/>
            <person name="Grymonprez B."/>
            <person name="Weltjens I."/>
            <person name="Vanstreels E."/>
            <person name="Rieger M."/>
            <person name="Schaefer M."/>
            <person name="Mueller-Auer S."/>
            <person name="Gabel C."/>
            <person name="Fuchs M."/>
            <person name="Duesterhoeft A."/>
            <person name="Fritzc C."/>
            <person name="Holzer E."/>
            <person name="Moestl D."/>
            <person name="Hilbert H."/>
            <person name="Borzym K."/>
            <person name="Langer I."/>
            <person name="Beck A."/>
            <person name="Lehrach H."/>
            <person name="Reinhardt R."/>
            <person name="Pohl T.M."/>
            <person name="Eger P."/>
            <person name="Zimmermann W."/>
            <person name="Wedler H."/>
            <person name="Wambutt R."/>
            <person name="Purnelle B."/>
            <person name="Goffeau A."/>
            <person name="Cadieu E."/>
            <person name="Dreano S."/>
            <person name="Gloux S."/>
            <person name="Lelaure V."/>
            <person name="Mottier S."/>
            <person name="Galibert F."/>
            <person name="Aves S.J."/>
            <person name="Xiang Z."/>
            <person name="Hunt C."/>
            <person name="Moore K."/>
            <person name="Hurst S.M."/>
            <person name="Lucas M."/>
            <person name="Rochet M."/>
            <person name="Gaillardin C."/>
            <person name="Tallada V.A."/>
            <person name="Garzon A."/>
            <person name="Thode G."/>
            <person name="Daga R.R."/>
            <person name="Cruzado L."/>
            <person name="Jimenez J."/>
            <person name="Sanchez M."/>
            <person name="del Rey F."/>
            <person name="Benito J."/>
            <person name="Dominguez A."/>
            <person name="Revuelta J.L."/>
            <person name="Moreno S."/>
            <person name="Armstrong J."/>
            <person name="Forsburg S.L."/>
            <person name="Cerutti L."/>
            <person name="Lowe T."/>
            <person name="McCombie W.R."/>
            <person name="Paulsen I."/>
            <person name="Potashkin J."/>
            <person name="Shpakovski G.V."/>
            <person name="Ussery D."/>
            <person name="Barrell B.G."/>
            <person name="Nurse P."/>
        </authorList>
    </citation>
    <scope>NUCLEOTIDE SEQUENCE [LARGE SCALE GENOMIC DNA]</scope>
    <source>
        <strain>972 / ATCC 24843</strain>
    </source>
</reference>
<reference key="2">
    <citation type="journal article" date="2006" name="Nat. Biotechnol.">
        <title>ORFeome cloning and global analysis of protein localization in the fission yeast Schizosaccharomyces pombe.</title>
        <authorList>
            <person name="Matsuyama A."/>
            <person name="Arai R."/>
            <person name="Yashiroda Y."/>
            <person name="Shirai A."/>
            <person name="Kamata A."/>
            <person name="Sekido S."/>
            <person name="Kobayashi Y."/>
            <person name="Hashimoto A."/>
            <person name="Hamamoto M."/>
            <person name="Hiraoka Y."/>
            <person name="Horinouchi S."/>
            <person name="Yoshida M."/>
        </authorList>
    </citation>
    <scope>SUBCELLULAR LOCATION [LARGE SCALE ANALYSIS]</scope>
</reference>
<organism>
    <name type="scientific">Schizosaccharomyces pombe (strain 972 / ATCC 24843)</name>
    <name type="common">Fission yeast</name>
    <dbReference type="NCBI Taxonomy" id="284812"/>
    <lineage>
        <taxon>Eukaryota</taxon>
        <taxon>Fungi</taxon>
        <taxon>Dikarya</taxon>
        <taxon>Ascomycota</taxon>
        <taxon>Taphrinomycotina</taxon>
        <taxon>Schizosaccharomycetes</taxon>
        <taxon>Schizosaccharomycetales</taxon>
        <taxon>Schizosaccharomycetaceae</taxon>
        <taxon>Schizosaccharomyces</taxon>
    </lineage>
</organism>
<comment type="function">
    <text evidence="1">Involved in biosynthesis of fatty acids in mitochondria.</text>
</comment>
<comment type="catalytic activity">
    <reaction>
        <text>holo-[ACP] + malonyl-CoA = malonyl-[ACP] + CoA</text>
        <dbReference type="Rhea" id="RHEA:41792"/>
        <dbReference type="Rhea" id="RHEA-COMP:9623"/>
        <dbReference type="Rhea" id="RHEA-COMP:9685"/>
        <dbReference type="ChEBI" id="CHEBI:57287"/>
        <dbReference type="ChEBI" id="CHEBI:57384"/>
        <dbReference type="ChEBI" id="CHEBI:64479"/>
        <dbReference type="ChEBI" id="CHEBI:78449"/>
        <dbReference type="EC" id="2.3.1.39"/>
    </reaction>
</comment>
<comment type="pathway">
    <text>Lipid metabolism; fatty acid biosynthesis.</text>
</comment>
<comment type="subcellular location">
    <subcellularLocation>
        <location evidence="3">Mitochondrion</location>
    </subcellularLocation>
</comment>
<comment type="similarity">
    <text evidence="4">Belongs to the FabD family.</text>
</comment>
<proteinExistence type="inferred from homology"/>
<feature type="transit peptide" description="Mitochondrion" evidence="2">
    <location>
        <begin position="1"/>
        <end status="unknown"/>
    </location>
</feature>
<feature type="chain" id="PRO_0000314111" description="Malonyl CoA-acyl carrier protein transacylase, mitochondrial">
    <location>
        <begin status="unknown"/>
        <end position="318"/>
    </location>
</feature>
<protein>
    <recommendedName>
        <fullName>Malonyl CoA-acyl carrier protein transacylase, mitochondrial</fullName>
        <shortName>MCT</shortName>
        <ecNumber>2.3.1.39</ecNumber>
    </recommendedName>
    <alternativeName>
        <fullName>Malonyl-CoA:ACP transferase</fullName>
    </alternativeName>
</protein>
<sequence>MSAILFPGQGVDWKTWMQPYLENNIVQNTLKEAENVTEIEIRKYIVEAEAKSNLRQPITTIAQPAILACSIALLRAFPPFTKKFRFYVGHSLGEYSAFVASQTLSFSSALKLVQARAKAMSYASALCQNPTSMLAITLTSRFPTDNFLNTVYSAVQKYRLIDIANVNSDRQIVLSGDKKELESITSTLSELVRSLGKLRSNWLDVSGAFHSRYMLPARDSLKNALGETEFNISPELCYTDSGKRFLPIISNVTAELYPADEEDIRRQLLLQCFRPVLFKNCLKTVKSKYGANLFYAYGPGTTMQSIAKQNGISTKSRP</sequence>
<gene>
    <name type="primary">mct1</name>
    <name type="ORF">SPAC11G7.05c</name>
</gene>
<accession>O13698</accession>
<keyword id="KW-0012">Acyltransferase</keyword>
<keyword id="KW-0275">Fatty acid biosynthesis</keyword>
<keyword id="KW-0276">Fatty acid metabolism</keyword>
<keyword id="KW-0444">Lipid biosynthesis</keyword>
<keyword id="KW-0443">Lipid metabolism</keyword>
<keyword id="KW-0496">Mitochondrion</keyword>
<keyword id="KW-1185">Reference proteome</keyword>
<keyword id="KW-0808">Transferase</keyword>
<keyword id="KW-0809">Transit peptide</keyword>
<name>FABD_SCHPO</name>
<dbReference type="EC" id="2.3.1.39"/>
<dbReference type="EMBL" id="CU329670">
    <property type="protein sequence ID" value="CAB16210.1"/>
    <property type="molecule type" value="Genomic_DNA"/>
</dbReference>
<dbReference type="PIR" id="T37548">
    <property type="entry name" value="T37548"/>
</dbReference>
<dbReference type="RefSeq" id="NP_594399.1">
    <property type="nucleotide sequence ID" value="NM_001019822.2"/>
</dbReference>
<dbReference type="SMR" id="O13698"/>
<dbReference type="BioGRID" id="278158">
    <property type="interactions" value="1"/>
</dbReference>
<dbReference type="FunCoup" id="O13698">
    <property type="interactions" value="356"/>
</dbReference>
<dbReference type="STRING" id="284812.O13698"/>
<dbReference type="PaxDb" id="4896-SPAC11G7.05c.1"/>
<dbReference type="EnsemblFungi" id="SPAC11G7.05c.1">
    <property type="protein sequence ID" value="SPAC11G7.05c.1:pep"/>
    <property type="gene ID" value="SPAC11G7.05c"/>
</dbReference>
<dbReference type="GeneID" id="2541662"/>
<dbReference type="KEGG" id="spo:2541662"/>
<dbReference type="PomBase" id="SPAC11G7.05c">
    <property type="gene designation" value="mct1"/>
</dbReference>
<dbReference type="VEuPathDB" id="FungiDB:SPAC11G7.05c"/>
<dbReference type="eggNOG" id="KOG2926">
    <property type="taxonomic scope" value="Eukaryota"/>
</dbReference>
<dbReference type="HOGENOM" id="CLU_030558_0_1_1"/>
<dbReference type="InParanoid" id="O13698"/>
<dbReference type="OMA" id="LNKTQFT"/>
<dbReference type="PhylomeDB" id="O13698"/>
<dbReference type="Reactome" id="R-SPO-77289">
    <property type="pathway name" value="Mitochondrial Fatty Acid Beta-Oxidation"/>
</dbReference>
<dbReference type="UniPathway" id="UPA00094"/>
<dbReference type="PRO" id="PR:O13698"/>
<dbReference type="Proteomes" id="UP000002485">
    <property type="component" value="Chromosome I"/>
</dbReference>
<dbReference type="GO" id="GO:0005739">
    <property type="term" value="C:mitochondrion"/>
    <property type="evidence" value="ECO:0007005"/>
    <property type="project" value="PomBase"/>
</dbReference>
<dbReference type="GO" id="GO:0004314">
    <property type="term" value="F:[acyl-carrier-protein] S-malonyltransferase activity"/>
    <property type="evidence" value="ECO:0000318"/>
    <property type="project" value="GO_Central"/>
</dbReference>
<dbReference type="GO" id="GO:0006633">
    <property type="term" value="P:fatty acid biosynthetic process"/>
    <property type="evidence" value="ECO:0000318"/>
    <property type="project" value="GO_Central"/>
</dbReference>
<dbReference type="FunFam" id="3.30.70.250:FF:000013">
    <property type="entry name" value="Malonyl CoA-acyl carrier protein transacylase, mitochondrial"/>
    <property type="match status" value="1"/>
</dbReference>
<dbReference type="Gene3D" id="3.30.70.250">
    <property type="entry name" value="Malonyl-CoA ACP transacylase, ACP-binding"/>
    <property type="match status" value="1"/>
</dbReference>
<dbReference type="Gene3D" id="3.40.366.10">
    <property type="entry name" value="Malonyl-Coenzyme A Acyl Carrier Protein, domain 2"/>
    <property type="match status" value="1"/>
</dbReference>
<dbReference type="InterPro" id="IPR001227">
    <property type="entry name" value="Ac_transferase_dom_sf"/>
</dbReference>
<dbReference type="InterPro" id="IPR014043">
    <property type="entry name" value="Acyl_transferase_dom"/>
</dbReference>
<dbReference type="InterPro" id="IPR016035">
    <property type="entry name" value="Acyl_Trfase/lysoPLipase"/>
</dbReference>
<dbReference type="InterPro" id="IPR050858">
    <property type="entry name" value="Mal-CoA-ACP_Trans/PKS_FabD"/>
</dbReference>
<dbReference type="InterPro" id="IPR016036">
    <property type="entry name" value="Malonyl_transacylase_ACP-bd"/>
</dbReference>
<dbReference type="PANTHER" id="PTHR42681">
    <property type="entry name" value="MALONYL-COA-ACYL CARRIER PROTEIN TRANSACYLASE, MITOCHONDRIAL"/>
    <property type="match status" value="1"/>
</dbReference>
<dbReference type="PANTHER" id="PTHR42681:SF1">
    <property type="entry name" value="MALONYL-COA-ACYL CARRIER PROTEIN TRANSACYLASE, MITOCHONDRIAL"/>
    <property type="match status" value="1"/>
</dbReference>
<dbReference type="Pfam" id="PF00698">
    <property type="entry name" value="Acyl_transf_1"/>
    <property type="match status" value="1"/>
</dbReference>
<dbReference type="SMART" id="SM00827">
    <property type="entry name" value="PKS_AT"/>
    <property type="match status" value="1"/>
</dbReference>
<dbReference type="SUPFAM" id="SSF52151">
    <property type="entry name" value="FabD/lysophospholipase-like"/>
    <property type="match status" value="1"/>
</dbReference>
<dbReference type="SUPFAM" id="SSF55048">
    <property type="entry name" value="Probable ACP-binding domain of malonyl-CoA ACP transacylase"/>
    <property type="match status" value="1"/>
</dbReference>
<evidence type="ECO:0000250" key="1"/>
<evidence type="ECO:0000255" key="2"/>
<evidence type="ECO:0000269" key="3">
    <source>
    </source>
</evidence>
<evidence type="ECO:0000305" key="4"/>